<name>QUEF_PARDP</name>
<dbReference type="EC" id="1.7.1.13" evidence="1"/>
<dbReference type="EMBL" id="CP000490">
    <property type="protein sequence ID" value="ABL72246.1"/>
    <property type="molecule type" value="Genomic_DNA"/>
</dbReference>
<dbReference type="RefSeq" id="WP_011750411.1">
    <property type="nucleotide sequence ID" value="NC_008687.1"/>
</dbReference>
<dbReference type="SMR" id="A1B9Q2"/>
<dbReference type="STRING" id="318586.Pden_4182"/>
<dbReference type="EnsemblBacteria" id="ABL72246">
    <property type="protein sequence ID" value="ABL72246"/>
    <property type="gene ID" value="Pden_4182"/>
</dbReference>
<dbReference type="GeneID" id="93453848"/>
<dbReference type="KEGG" id="pde:Pden_4182"/>
<dbReference type="eggNOG" id="COG0780">
    <property type="taxonomic scope" value="Bacteria"/>
</dbReference>
<dbReference type="HOGENOM" id="CLU_102489_0_1_5"/>
<dbReference type="OrthoDB" id="9789995at2"/>
<dbReference type="UniPathway" id="UPA00392"/>
<dbReference type="Proteomes" id="UP000000361">
    <property type="component" value="Chromosome 2"/>
</dbReference>
<dbReference type="GO" id="GO:0005737">
    <property type="term" value="C:cytoplasm"/>
    <property type="evidence" value="ECO:0007669"/>
    <property type="project" value="UniProtKB-SubCell"/>
</dbReference>
<dbReference type="GO" id="GO:0033739">
    <property type="term" value="F:preQ1 synthase activity"/>
    <property type="evidence" value="ECO:0007669"/>
    <property type="project" value="UniProtKB-UniRule"/>
</dbReference>
<dbReference type="GO" id="GO:0008616">
    <property type="term" value="P:queuosine biosynthetic process"/>
    <property type="evidence" value="ECO:0007669"/>
    <property type="project" value="UniProtKB-UniRule"/>
</dbReference>
<dbReference type="GO" id="GO:0006400">
    <property type="term" value="P:tRNA modification"/>
    <property type="evidence" value="ECO:0007669"/>
    <property type="project" value="UniProtKB-UniRule"/>
</dbReference>
<dbReference type="Gene3D" id="3.30.1130.10">
    <property type="match status" value="1"/>
</dbReference>
<dbReference type="HAMAP" id="MF_00818">
    <property type="entry name" value="QueF_type1"/>
    <property type="match status" value="1"/>
</dbReference>
<dbReference type="InterPro" id="IPR043133">
    <property type="entry name" value="GTP-CH-I_C/QueF"/>
</dbReference>
<dbReference type="InterPro" id="IPR050084">
    <property type="entry name" value="NADPH_dep_7-cyano-7-deazaG_red"/>
</dbReference>
<dbReference type="InterPro" id="IPR029500">
    <property type="entry name" value="QueF"/>
</dbReference>
<dbReference type="InterPro" id="IPR016856">
    <property type="entry name" value="QueF_type1"/>
</dbReference>
<dbReference type="NCBIfam" id="TIGR03139">
    <property type="entry name" value="QueF-II"/>
    <property type="match status" value="1"/>
</dbReference>
<dbReference type="PANTHER" id="PTHR34354">
    <property type="entry name" value="NADPH-DEPENDENT 7-CYANO-7-DEAZAGUANINE REDUCTASE"/>
    <property type="match status" value="1"/>
</dbReference>
<dbReference type="PANTHER" id="PTHR34354:SF1">
    <property type="entry name" value="NADPH-DEPENDENT 7-CYANO-7-DEAZAGUANINE REDUCTASE"/>
    <property type="match status" value="1"/>
</dbReference>
<dbReference type="Pfam" id="PF14489">
    <property type="entry name" value="QueF"/>
    <property type="match status" value="1"/>
</dbReference>
<dbReference type="SUPFAM" id="SSF55620">
    <property type="entry name" value="Tetrahydrobiopterin biosynthesis enzymes-like"/>
    <property type="match status" value="1"/>
</dbReference>
<protein>
    <recommendedName>
        <fullName evidence="1">NADPH-dependent 7-cyano-7-deazaguanine reductase</fullName>
        <ecNumber evidence="1">1.7.1.13</ecNumber>
    </recommendedName>
    <alternativeName>
        <fullName evidence="1">7-cyano-7-carbaguanine reductase</fullName>
    </alternativeName>
    <alternativeName>
        <fullName evidence="1">NADPH-dependent nitrile oxidoreductase</fullName>
    </alternativeName>
    <alternativeName>
        <fullName evidence="1">PreQ(0) reductase</fullName>
    </alternativeName>
</protein>
<organism>
    <name type="scientific">Paracoccus denitrificans (strain Pd 1222)</name>
    <dbReference type="NCBI Taxonomy" id="318586"/>
    <lineage>
        <taxon>Bacteria</taxon>
        <taxon>Pseudomonadati</taxon>
        <taxon>Pseudomonadota</taxon>
        <taxon>Alphaproteobacteria</taxon>
        <taxon>Rhodobacterales</taxon>
        <taxon>Paracoccaceae</taxon>
        <taxon>Paracoccus</taxon>
    </lineage>
</organism>
<accession>A1B9Q2</accession>
<reference key="1">
    <citation type="submission" date="2006-12" db="EMBL/GenBank/DDBJ databases">
        <title>Complete sequence of chromosome 2 of Paracoccus denitrificans PD1222.</title>
        <authorList>
            <person name="Copeland A."/>
            <person name="Lucas S."/>
            <person name="Lapidus A."/>
            <person name="Barry K."/>
            <person name="Detter J.C."/>
            <person name="Glavina del Rio T."/>
            <person name="Hammon N."/>
            <person name="Israni S."/>
            <person name="Dalin E."/>
            <person name="Tice H."/>
            <person name="Pitluck S."/>
            <person name="Munk A.C."/>
            <person name="Brettin T."/>
            <person name="Bruce D."/>
            <person name="Han C."/>
            <person name="Tapia R."/>
            <person name="Gilna P."/>
            <person name="Schmutz J."/>
            <person name="Larimer F."/>
            <person name="Land M."/>
            <person name="Hauser L."/>
            <person name="Kyrpides N."/>
            <person name="Lykidis A."/>
            <person name="Spiro S."/>
            <person name="Richardson D.J."/>
            <person name="Moir J.W.B."/>
            <person name="Ferguson S.J."/>
            <person name="van Spanning R.J.M."/>
            <person name="Richardson P."/>
        </authorList>
    </citation>
    <scope>NUCLEOTIDE SEQUENCE [LARGE SCALE GENOMIC DNA]</scope>
    <source>
        <strain>Pd 1222</strain>
    </source>
</reference>
<comment type="function">
    <text evidence="1">Catalyzes the NADPH-dependent reduction of 7-cyano-7-deazaguanine (preQ0) to 7-aminomethyl-7-deazaguanine (preQ1).</text>
</comment>
<comment type="catalytic activity">
    <reaction evidence="1">
        <text>7-aminomethyl-7-carbaguanine + 2 NADP(+) = 7-cyano-7-deazaguanine + 2 NADPH + 3 H(+)</text>
        <dbReference type="Rhea" id="RHEA:13409"/>
        <dbReference type="ChEBI" id="CHEBI:15378"/>
        <dbReference type="ChEBI" id="CHEBI:45075"/>
        <dbReference type="ChEBI" id="CHEBI:57783"/>
        <dbReference type="ChEBI" id="CHEBI:58349"/>
        <dbReference type="ChEBI" id="CHEBI:58703"/>
        <dbReference type="EC" id="1.7.1.13"/>
    </reaction>
</comment>
<comment type="pathway">
    <text evidence="1">tRNA modification; tRNA-queuosine biosynthesis.</text>
</comment>
<comment type="subcellular location">
    <subcellularLocation>
        <location evidence="1">Cytoplasm</location>
    </subcellularLocation>
</comment>
<comment type="similarity">
    <text evidence="1">Belongs to the GTP cyclohydrolase I family. QueF type 1 subfamily.</text>
</comment>
<gene>
    <name evidence="1" type="primary">queF</name>
    <name type="ordered locus">Pden_4182</name>
</gene>
<sequence length="154" mass="17300">MTETIYSGLKQLGGATLLPESPDKAELERVRNPQADVAYNVRFTAPEFTSLCPMTGQPDFAHLVIDYVPGEWLVESKSLKLYLGSFRNHGAFHEDCTVSIGRRLAGFLAPRWLRIGGYWYPRGGMPIDVFWQTGPMPEGVWIPDQDVPPYRGRG</sequence>
<keyword id="KW-0963">Cytoplasm</keyword>
<keyword id="KW-0521">NADP</keyword>
<keyword id="KW-0560">Oxidoreductase</keyword>
<keyword id="KW-0671">Queuosine biosynthesis</keyword>
<keyword id="KW-1185">Reference proteome</keyword>
<feature type="chain" id="PRO_1000062400" description="NADPH-dependent 7-cyano-7-deazaguanine reductase">
    <location>
        <begin position="1"/>
        <end position="154"/>
    </location>
</feature>
<feature type="active site" description="Thioimide intermediate" evidence="1">
    <location>
        <position position="52"/>
    </location>
</feature>
<feature type="active site" description="Proton donor" evidence="1">
    <location>
        <position position="59"/>
    </location>
</feature>
<feature type="binding site" evidence="1">
    <location>
        <begin position="74"/>
        <end position="76"/>
    </location>
    <ligand>
        <name>substrate</name>
    </ligand>
</feature>
<feature type="binding site" evidence="1">
    <location>
        <begin position="93"/>
        <end position="94"/>
    </location>
    <ligand>
        <name>substrate</name>
    </ligand>
</feature>
<proteinExistence type="inferred from homology"/>
<evidence type="ECO:0000255" key="1">
    <source>
        <dbReference type="HAMAP-Rule" id="MF_00818"/>
    </source>
</evidence>